<dbReference type="SMR" id="P58458"/>
<dbReference type="GO" id="GO:0006952">
    <property type="term" value="P:defense response"/>
    <property type="evidence" value="ECO:0007669"/>
    <property type="project" value="UniProtKB-KW"/>
</dbReference>
<dbReference type="InterPro" id="IPR005535">
    <property type="entry name" value="Cyclotide"/>
</dbReference>
<dbReference type="InterPro" id="IPR012324">
    <property type="entry name" value="Cyclotide_moebius_CS"/>
</dbReference>
<dbReference type="InterPro" id="IPR036146">
    <property type="entry name" value="Cyclotide_sf"/>
</dbReference>
<dbReference type="Pfam" id="PF03784">
    <property type="entry name" value="Cyclotide"/>
    <property type="match status" value="1"/>
</dbReference>
<dbReference type="PIRSF" id="PIRSF037891">
    <property type="entry name" value="Cycloviolacin"/>
    <property type="match status" value="1"/>
</dbReference>
<dbReference type="SUPFAM" id="SSF57038">
    <property type="entry name" value="Cyclotides"/>
    <property type="match status" value="1"/>
</dbReference>
<dbReference type="PROSITE" id="PS51052">
    <property type="entry name" value="CYCLOTIDE"/>
    <property type="match status" value="1"/>
</dbReference>
<dbReference type="PROSITE" id="PS60009">
    <property type="entry name" value="CYCLOTIDE_MOEBIUS"/>
    <property type="match status" value="1"/>
</dbReference>
<reference key="1">
    <citation type="journal article" date="1999" name="J. Mol. Biol.">
        <title>Plant cyclotides: a unique family of cyclic and knotted proteins that defines the cyclic cystine knot structural motif.</title>
        <authorList>
            <person name="Craik D.J."/>
            <person name="Daly N.L."/>
            <person name="Bond T."/>
            <person name="Waine C."/>
        </authorList>
    </citation>
    <scope>PROTEIN SEQUENCE</scope>
</reference>
<feature type="peptide" id="PRO_0000043631" description="Kalata-S">
    <location>
        <begin position="1"/>
        <end position="29"/>
    </location>
</feature>
<feature type="disulfide bond">
    <location>
        <begin position="5"/>
        <end position="19"/>
    </location>
</feature>
<feature type="disulfide bond">
    <location>
        <begin position="9"/>
        <end position="21"/>
    </location>
</feature>
<feature type="disulfide bond">
    <location>
        <begin position="14"/>
        <end position="26"/>
    </location>
</feature>
<feature type="cross-link" description="Cyclopeptide (Gly-Asn)">
    <location>
        <begin position="1"/>
        <end position="29"/>
    </location>
</feature>
<proteinExistence type="evidence at protein level"/>
<organism>
    <name type="scientific">Oldenlandia affinis</name>
    <dbReference type="NCBI Taxonomy" id="60225"/>
    <lineage>
        <taxon>Eukaryota</taxon>
        <taxon>Viridiplantae</taxon>
        <taxon>Streptophyta</taxon>
        <taxon>Embryophyta</taxon>
        <taxon>Tracheophyta</taxon>
        <taxon>Spermatophyta</taxon>
        <taxon>Magnoliopsida</taxon>
        <taxon>eudicotyledons</taxon>
        <taxon>Gunneridae</taxon>
        <taxon>Pentapetalae</taxon>
        <taxon>asterids</taxon>
        <taxon>lamiids</taxon>
        <taxon>Gentianales</taxon>
        <taxon>Rubiaceae</taxon>
        <taxon>Rubioideae</taxon>
        <taxon>Spermacoceae</taxon>
        <taxon>Hedyotis-Oldenlandia complex</taxon>
        <taxon>Oldenlandia</taxon>
    </lineage>
</organism>
<accession>P58458</accession>
<sequence length="29" mass="2902">GLPVCGETCVGGTCNTPGCSCSWPVCTRN</sequence>
<name>KABS_OLDAF</name>
<protein>
    <recommendedName>
        <fullName>Kalata-S</fullName>
    </recommendedName>
</protein>
<evidence type="ECO:0000255" key="1">
    <source>
        <dbReference type="PROSITE-ProRule" id="PRU00395"/>
    </source>
</evidence>
<evidence type="ECO:0000305" key="2"/>
<keyword id="KW-0903">Direct protein sequencing</keyword>
<keyword id="KW-1015">Disulfide bond</keyword>
<keyword id="KW-0960">Knottin</keyword>
<keyword id="KW-0611">Plant defense</keyword>
<comment type="function">
    <text>Probably participates in a plant defense mechanism.</text>
</comment>
<comment type="domain">
    <text>The presence of a 'disulfide through disulfide knot' structurally defines this protein as a knottin.</text>
</comment>
<comment type="PTM">
    <text>This is a cyclic peptide.</text>
</comment>
<comment type="similarity">
    <text evidence="1">Belongs to the cyclotide family. Moebius subfamily.</text>
</comment>
<comment type="caution">
    <text evidence="2">This peptide is cyclic. The start position was chosen by similarity to OAK1 (kalata-B1) for which the DNA sequence is known.</text>
</comment>